<reference key="1">
    <citation type="journal article" date="1998" name="J. Biol. Chem.">
        <title>The X11alpha protein slows cellular amyloid precursor protein processing and reduces Abeta40 and Abeta42 secretion.</title>
        <authorList>
            <person name="Borg J.-P."/>
            <person name="Yang Y."/>
            <person name="De Taddeo-Borg M."/>
            <person name="Margolis B."/>
            <person name="Turner R.S."/>
        </authorList>
    </citation>
    <scope>NUCLEOTIDE SEQUENCE [MRNA] (ISOFORM 1)</scope>
    <source>
        <tissue>Brain</tissue>
    </source>
</reference>
<reference key="2">
    <citation type="journal article" date="1999" name="J. Biol. Chem.">
        <title>Interaction of a neuron-specific protein containing PDZ domains with Alzheimer's amyloid precursor protein.</title>
        <authorList>
            <person name="Tomita S."/>
            <person name="Ozaki T."/>
            <person name="Taru H."/>
            <person name="Oguchi S."/>
            <person name="Takeda S."/>
            <person name="Yagi Y."/>
            <person name="Sakiyama S."/>
            <person name="Kirino Y."/>
            <person name="Suzuki T."/>
        </authorList>
    </citation>
    <scope>NUCLEOTIDE SEQUENCE [MRNA] (ISOFORM 1)</scope>
    <source>
        <tissue>Brain</tissue>
    </source>
</reference>
<reference key="3">
    <citation type="journal article" date="2006" name="Nature">
        <title>Analysis of the DNA sequence and duplication history of human chromosome 15.</title>
        <authorList>
            <person name="Zody M.C."/>
            <person name="Garber M."/>
            <person name="Sharpe T."/>
            <person name="Young S.K."/>
            <person name="Rowen L."/>
            <person name="O'Neill K."/>
            <person name="Whittaker C.A."/>
            <person name="Kamal M."/>
            <person name="Chang J.L."/>
            <person name="Cuomo C.A."/>
            <person name="Dewar K."/>
            <person name="FitzGerald M.G."/>
            <person name="Kodira C.D."/>
            <person name="Madan A."/>
            <person name="Qin S."/>
            <person name="Yang X."/>
            <person name="Abbasi N."/>
            <person name="Abouelleil A."/>
            <person name="Arachchi H.M."/>
            <person name="Baradarani L."/>
            <person name="Birditt B."/>
            <person name="Bloom S."/>
            <person name="Bloom T."/>
            <person name="Borowsky M.L."/>
            <person name="Burke J."/>
            <person name="Butler J."/>
            <person name="Cook A."/>
            <person name="DeArellano K."/>
            <person name="DeCaprio D."/>
            <person name="Dorris L. III"/>
            <person name="Dors M."/>
            <person name="Eichler E.E."/>
            <person name="Engels R."/>
            <person name="Fahey J."/>
            <person name="Fleetwood P."/>
            <person name="Friedman C."/>
            <person name="Gearin G."/>
            <person name="Hall J.L."/>
            <person name="Hensley G."/>
            <person name="Johnson E."/>
            <person name="Jones C."/>
            <person name="Kamat A."/>
            <person name="Kaur A."/>
            <person name="Locke D.P."/>
            <person name="Madan A."/>
            <person name="Munson G."/>
            <person name="Jaffe D.B."/>
            <person name="Lui A."/>
            <person name="Macdonald P."/>
            <person name="Mauceli E."/>
            <person name="Naylor J.W."/>
            <person name="Nesbitt R."/>
            <person name="Nicol R."/>
            <person name="O'Leary S.B."/>
            <person name="Ratcliffe A."/>
            <person name="Rounsley S."/>
            <person name="She X."/>
            <person name="Sneddon K.M.B."/>
            <person name="Stewart S."/>
            <person name="Sougnez C."/>
            <person name="Stone S.M."/>
            <person name="Topham K."/>
            <person name="Vincent D."/>
            <person name="Wang S."/>
            <person name="Zimmer A.R."/>
            <person name="Birren B.W."/>
            <person name="Hood L."/>
            <person name="Lander E.S."/>
            <person name="Nusbaum C."/>
        </authorList>
    </citation>
    <scope>NUCLEOTIDE SEQUENCE [LARGE SCALE GENOMIC DNA]</scope>
</reference>
<reference key="4">
    <citation type="journal article" date="2004" name="Genome Res.">
        <title>The status, quality, and expansion of the NIH full-length cDNA project: the Mammalian Gene Collection (MGC).</title>
        <authorList>
            <consortium name="The MGC Project Team"/>
        </authorList>
    </citation>
    <scope>NUCLEOTIDE SEQUENCE [LARGE SCALE MRNA] (ISOFORM 2)</scope>
    <scope>VARIANT PRO-311</scope>
    <source>
        <tissue>Ovary</tissue>
    </source>
</reference>
<reference key="5">
    <citation type="journal article" date="1997" name="J. Biol. Chem.">
        <title>Mints, Munc18-interacting proteins in synaptic vesicle exocytosis.</title>
        <authorList>
            <person name="Okamoto M."/>
            <person name="Suedhof T.C."/>
        </authorList>
    </citation>
    <scope>NUCLEOTIDE SEQUENCE [MRNA] OF 532-749 (ISOFORM 1)</scope>
    <source>
        <tissue>Brain</tissue>
    </source>
</reference>
<reference key="6">
    <citation type="journal article" date="1997" name="Genome Res.">
        <title>Large-scale concatenation cDNA sequencing.</title>
        <authorList>
            <person name="Yu W."/>
            <person name="Andersson B."/>
            <person name="Worley K.C."/>
            <person name="Muzny D.M."/>
            <person name="Ding Y."/>
            <person name="Liu W."/>
            <person name="Ricafrente J.Y."/>
            <person name="Wentland M.A."/>
            <person name="Lennon G."/>
            <person name="Gibbs R.A."/>
        </authorList>
    </citation>
    <scope>NUCLEOTIDE SEQUENCE [LARGE SCALE MRNA] OF 532-749 (ISOFORM 1)</scope>
    <source>
        <tissue>Brain</tissue>
    </source>
</reference>
<reference key="7">
    <citation type="journal article" date="2000" name="J. Biol. Chem.">
        <title>Regulation of X11L-dependent amyloid precursor protein metabolism by XB51, a novel X11L-binding protein.</title>
        <authorList>
            <person name="Lee D.-S."/>
            <person name="Tomita S."/>
            <person name="Kirino Y."/>
            <person name="Suzuki T."/>
        </authorList>
    </citation>
    <scope>INTERACTION WITH NECAB3</scope>
    <source>
        <tissue>Brain</tissue>
    </source>
</reference>
<reference key="8">
    <citation type="journal article" date="2009" name="Anal. Chem.">
        <title>Lys-N and trypsin cover complementary parts of the phosphoproteome in a refined SCX-based approach.</title>
        <authorList>
            <person name="Gauci S."/>
            <person name="Helbig A.O."/>
            <person name="Slijper M."/>
            <person name="Krijgsveld J."/>
            <person name="Heck A.J."/>
            <person name="Mohammed S."/>
        </authorList>
    </citation>
    <scope>IDENTIFICATION BY MASS SPECTROMETRY [LARGE SCALE ANALYSIS]</scope>
</reference>
<reference key="9">
    <citation type="journal article" date="2013" name="J. Proteome Res.">
        <title>Toward a comprehensive characterization of a human cancer cell phosphoproteome.</title>
        <authorList>
            <person name="Zhou H."/>
            <person name="Di Palma S."/>
            <person name="Preisinger C."/>
            <person name="Peng M."/>
            <person name="Polat A.N."/>
            <person name="Heck A.J."/>
            <person name="Mohammed S."/>
        </authorList>
    </citation>
    <scope>PHOSPHORYLATION [LARGE SCALE ANALYSIS] AT SER-11 AND SER-208</scope>
    <scope>IDENTIFICATION BY MASS SPECTROMETRY [LARGE SCALE ANALYSIS]</scope>
    <source>
        <tissue>Erythroleukemia</tissue>
    </source>
</reference>
<evidence type="ECO:0000255" key="1">
    <source>
        <dbReference type="PROSITE-ProRule" id="PRU00143"/>
    </source>
</evidence>
<evidence type="ECO:0000255" key="2">
    <source>
        <dbReference type="PROSITE-ProRule" id="PRU00148"/>
    </source>
</evidence>
<evidence type="ECO:0000256" key="3">
    <source>
        <dbReference type="SAM" id="MobiDB-lite"/>
    </source>
</evidence>
<evidence type="ECO:0000269" key="4">
    <source>
    </source>
</evidence>
<evidence type="ECO:0000269" key="5">
    <source>
    </source>
</evidence>
<evidence type="ECO:0000303" key="6">
    <source>
    </source>
</evidence>
<evidence type="ECO:0000305" key="7"/>
<evidence type="ECO:0007744" key="8">
    <source>
    </source>
</evidence>
<gene>
    <name type="primary">APBA2</name>
    <name type="synonym">MINT2</name>
    <name type="synonym">X11L</name>
</gene>
<feature type="chain" id="PRO_0000064616" description="Amyloid-beta A4 precursor protein-binding family A member 2">
    <location>
        <begin position="1"/>
        <end position="749"/>
    </location>
</feature>
<feature type="domain" description="PID" evidence="2">
    <location>
        <begin position="368"/>
        <end position="555"/>
    </location>
</feature>
<feature type="domain" description="PDZ 1" evidence="1">
    <location>
        <begin position="568"/>
        <end position="654"/>
    </location>
</feature>
<feature type="domain" description="PDZ 2" evidence="1">
    <location>
        <begin position="659"/>
        <end position="734"/>
    </location>
</feature>
<feature type="region of interest" description="Disordered" evidence="3">
    <location>
        <begin position="1"/>
        <end position="94"/>
    </location>
</feature>
<feature type="region of interest" description="Disordered" evidence="3">
    <location>
        <begin position="130"/>
        <end position="220"/>
    </location>
</feature>
<feature type="region of interest" description="STXBP1-binding">
    <location>
        <begin position="185"/>
        <end position="270"/>
    </location>
</feature>
<feature type="region of interest" description="Disordered" evidence="3">
    <location>
        <begin position="238"/>
        <end position="344"/>
    </location>
</feature>
<feature type="compositionally biased region" description="Polar residues" evidence="3">
    <location>
        <begin position="70"/>
        <end position="80"/>
    </location>
</feature>
<feature type="compositionally biased region" description="Acidic residues" evidence="3">
    <location>
        <begin position="81"/>
        <end position="94"/>
    </location>
</feature>
<feature type="compositionally biased region" description="Acidic residues" evidence="3">
    <location>
        <begin position="131"/>
        <end position="142"/>
    </location>
</feature>
<feature type="compositionally biased region" description="Polar residues" evidence="3">
    <location>
        <begin position="238"/>
        <end position="247"/>
    </location>
</feature>
<feature type="compositionally biased region" description="Basic and acidic residues" evidence="3">
    <location>
        <begin position="305"/>
        <end position="315"/>
    </location>
</feature>
<feature type="modified residue" description="Phosphoserine" evidence="8">
    <location>
        <position position="11"/>
    </location>
</feature>
<feature type="modified residue" description="Phosphoserine" evidence="8">
    <location>
        <position position="208"/>
    </location>
</feature>
<feature type="splice variant" id="VSP_045692" description="In isoform 2." evidence="6">
    <location>
        <begin position="406"/>
        <end position="417"/>
    </location>
</feature>
<feature type="sequence variant" id="VAR_050665" description="In dbSNP:rs8040932." evidence="5">
    <original>L</original>
    <variation>P</variation>
    <location>
        <position position="311"/>
    </location>
</feature>
<feature type="sequence conflict" description="In Ref. 2; BAA34734." evidence="7" ref="2">
    <original>Q</original>
    <variation>H</variation>
    <location>
        <position position="135"/>
    </location>
</feature>
<feature type="sequence conflict" description="In Ref. 1; AAC39767." evidence="7" ref="1">
    <original>G</original>
    <variation>R</variation>
    <location>
        <position position="163"/>
    </location>
</feature>
<feature type="sequence conflict" description="In Ref. 1; AAC39767." evidence="7" ref="1">
    <original>DEPSVLEAHDQEEDGHYCASKEGYQDYYPEEANGNTGASPYRLRR</original>
    <variation>MSPPSLRPMTRKKMVTMCQQRGLPGLLPRGGQREHRRLPLPPEA</variation>
    <location>
        <begin position="170"/>
        <end position="214"/>
    </location>
</feature>
<feature type="sequence conflict" description="In Ref. 2; BAA34734." evidence="7" ref="2">
    <original>E</original>
    <variation>K</variation>
    <location>
        <position position="344"/>
    </location>
</feature>
<feature type="sequence conflict" description="In Ref. 2; BAA34734." evidence="7" ref="2">
    <original>F</original>
    <variation>L</variation>
    <location>
        <position position="354"/>
    </location>
</feature>
<feature type="sequence conflict" description="In Ref. 2; BAA34734." evidence="7" ref="2">
    <original>ED</original>
    <variation>KN</variation>
    <location>
        <begin position="364"/>
        <end position="365"/>
    </location>
</feature>
<feature type="sequence conflict" description="In Ref. 1; AAC39767." evidence="7" ref="1">
    <original>G</original>
    <variation>C</variation>
    <location>
        <position position="604"/>
    </location>
</feature>
<organism>
    <name type="scientific">Homo sapiens</name>
    <name type="common">Human</name>
    <dbReference type="NCBI Taxonomy" id="9606"/>
    <lineage>
        <taxon>Eukaryota</taxon>
        <taxon>Metazoa</taxon>
        <taxon>Chordata</taxon>
        <taxon>Craniata</taxon>
        <taxon>Vertebrata</taxon>
        <taxon>Euteleostomi</taxon>
        <taxon>Mammalia</taxon>
        <taxon>Eutheria</taxon>
        <taxon>Euarchontoglires</taxon>
        <taxon>Primates</taxon>
        <taxon>Haplorrhini</taxon>
        <taxon>Catarrhini</taxon>
        <taxon>Hominidae</taxon>
        <taxon>Homo</taxon>
    </lineage>
</organism>
<proteinExistence type="evidence at protein level"/>
<dbReference type="EMBL" id="AF047348">
    <property type="protein sequence ID" value="AAC39767.1"/>
    <property type="molecule type" value="mRNA"/>
</dbReference>
<dbReference type="EMBL" id="AB014719">
    <property type="protein sequence ID" value="BAA34734.1"/>
    <property type="molecule type" value="mRNA"/>
</dbReference>
<dbReference type="EMBL" id="AC024474">
    <property type="status" value="NOT_ANNOTATED_CDS"/>
    <property type="molecule type" value="Genomic_DNA"/>
</dbReference>
<dbReference type="EMBL" id="AC127522">
    <property type="status" value="NOT_ANNOTATED_CDS"/>
    <property type="molecule type" value="Genomic_DNA"/>
</dbReference>
<dbReference type="EMBL" id="AC174469">
    <property type="status" value="NOT_ANNOTATED_CDS"/>
    <property type="molecule type" value="Genomic_DNA"/>
</dbReference>
<dbReference type="EMBL" id="BC082986">
    <property type="protein sequence ID" value="AAH82986.1"/>
    <property type="molecule type" value="mRNA"/>
</dbReference>
<dbReference type="EMBL" id="AF029108">
    <property type="protein sequence ID" value="AAC05306.1"/>
    <property type="molecule type" value="mRNA"/>
</dbReference>
<dbReference type="EMBL" id="U79255">
    <property type="protein sequence ID" value="AAB50203.1"/>
    <property type="molecule type" value="mRNA"/>
</dbReference>
<dbReference type="CCDS" id="CCDS10022.1">
    <molecule id="Q99767-1"/>
</dbReference>
<dbReference type="CCDS" id="CCDS45197.1">
    <molecule id="Q99767-2"/>
</dbReference>
<dbReference type="RefSeq" id="NP_001123886.1">
    <molecule id="Q99767-2"/>
    <property type="nucleotide sequence ID" value="NM_001130414.1"/>
</dbReference>
<dbReference type="RefSeq" id="NP_001340717.1">
    <molecule id="Q99767-1"/>
    <property type="nucleotide sequence ID" value="NM_001353788.2"/>
</dbReference>
<dbReference type="RefSeq" id="NP_001340718.1">
    <molecule id="Q99767-1"/>
    <property type="nucleotide sequence ID" value="NM_001353789.2"/>
</dbReference>
<dbReference type="RefSeq" id="NP_001340719.1">
    <molecule id="Q99767-1"/>
    <property type="nucleotide sequence ID" value="NM_001353790.2"/>
</dbReference>
<dbReference type="RefSeq" id="NP_001340720.1">
    <molecule id="Q99767-1"/>
    <property type="nucleotide sequence ID" value="NM_001353791.2"/>
</dbReference>
<dbReference type="RefSeq" id="NP_001340721.1">
    <molecule id="Q99767-2"/>
    <property type="nucleotide sequence ID" value="NM_001353792.2"/>
</dbReference>
<dbReference type="RefSeq" id="NP_001340722.1">
    <molecule id="Q99767-2"/>
    <property type="nucleotide sequence ID" value="NM_001353793.2"/>
</dbReference>
<dbReference type="RefSeq" id="NP_001340723.1">
    <molecule id="Q99767-2"/>
    <property type="nucleotide sequence ID" value="NM_001353794.2"/>
</dbReference>
<dbReference type="RefSeq" id="NP_001366614.1">
    <molecule id="Q99767-1"/>
    <property type="nucleotide sequence ID" value="NM_001379685.1"/>
</dbReference>
<dbReference type="RefSeq" id="NP_005494.2">
    <molecule id="Q99767-1"/>
    <property type="nucleotide sequence ID" value="NM_005503.3"/>
</dbReference>
<dbReference type="RefSeq" id="XP_011519790.1">
    <molecule id="Q99767-1"/>
    <property type="nucleotide sequence ID" value="XM_011521488.4"/>
</dbReference>
<dbReference type="RefSeq" id="XP_011519791.1">
    <molecule id="Q99767-1"/>
    <property type="nucleotide sequence ID" value="XM_011521489.3"/>
</dbReference>
<dbReference type="RefSeq" id="XP_011519792.1">
    <molecule id="Q99767-1"/>
    <property type="nucleotide sequence ID" value="XM_011521490.3"/>
</dbReference>
<dbReference type="RefSeq" id="XP_011519793.1">
    <molecule id="Q99767-1"/>
    <property type="nucleotide sequence ID" value="XM_011521491.2"/>
</dbReference>
<dbReference type="RefSeq" id="XP_011519794.1">
    <molecule id="Q99767-1"/>
    <property type="nucleotide sequence ID" value="XM_011521492.3"/>
</dbReference>
<dbReference type="RefSeq" id="XP_016877590.1">
    <property type="nucleotide sequence ID" value="XM_017022101.1"/>
</dbReference>
<dbReference type="RefSeq" id="XP_016877591.1">
    <property type="nucleotide sequence ID" value="XM_017022102.1"/>
</dbReference>
<dbReference type="RefSeq" id="XP_016877592.1">
    <property type="nucleotide sequence ID" value="XM_017022103.1"/>
</dbReference>
<dbReference type="RefSeq" id="XP_016877593.1">
    <property type="nucleotide sequence ID" value="XM_017022104.1"/>
</dbReference>
<dbReference type="RefSeq" id="XP_016877594.1">
    <property type="nucleotide sequence ID" value="XM_017022105.1"/>
</dbReference>
<dbReference type="RefSeq" id="XP_016877595.1">
    <property type="nucleotide sequence ID" value="XM_017022106.1"/>
</dbReference>
<dbReference type="RefSeq" id="XP_016877596.1">
    <property type="nucleotide sequence ID" value="XM_017022107.1"/>
</dbReference>
<dbReference type="RefSeq" id="XP_016877597.1">
    <property type="nucleotide sequence ID" value="XM_017022108.1"/>
</dbReference>
<dbReference type="RefSeq" id="XP_016877598.1">
    <property type="nucleotide sequence ID" value="XM_017022109.1"/>
</dbReference>
<dbReference type="RefSeq" id="XP_016877599.1">
    <property type="nucleotide sequence ID" value="XM_017022110.1"/>
</dbReference>
<dbReference type="RefSeq" id="XP_016877600.1">
    <property type="nucleotide sequence ID" value="XM_017022111.1"/>
</dbReference>
<dbReference type="RefSeq" id="XP_016877601.1">
    <molecule id="Q99767-1"/>
    <property type="nucleotide sequence ID" value="XM_017022112.3"/>
</dbReference>
<dbReference type="RefSeq" id="XP_016877602.1">
    <property type="nucleotide sequence ID" value="XM_017022113.1"/>
</dbReference>
<dbReference type="RefSeq" id="XP_016877603.1">
    <property type="nucleotide sequence ID" value="XM_017022114.1"/>
</dbReference>
<dbReference type="RefSeq" id="XP_016877604.1">
    <property type="nucleotide sequence ID" value="XM_017022115.1"/>
</dbReference>
<dbReference type="RefSeq" id="XP_016877605.1">
    <property type="nucleotide sequence ID" value="XM_017022116.1"/>
</dbReference>
<dbReference type="RefSeq" id="XP_016877606.1">
    <property type="nucleotide sequence ID" value="XM_017022117.1"/>
</dbReference>
<dbReference type="RefSeq" id="XP_047288365.1">
    <molecule id="Q99767-1"/>
    <property type="nucleotide sequence ID" value="XM_047432409.1"/>
</dbReference>
<dbReference type="RefSeq" id="XP_047288366.1">
    <molecule id="Q99767-1"/>
    <property type="nucleotide sequence ID" value="XM_047432410.1"/>
</dbReference>
<dbReference type="RefSeq" id="XP_047288367.1">
    <molecule id="Q99767-1"/>
    <property type="nucleotide sequence ID" value="XM_047432411.1"/>
</dbReference>
<dbReference type="RefSeq" id="XP_047288368.1">
    <molecule id="Q99767-1"/>
    <property type="nucleotide sequence ID" value="XM_047432412.1"/>
</dbReference>
<dbReference type="RefSeq" id="XP_047288370.1">
    <molecule id="Q99767-2"/>
    <property type="nucleotide sequence ID" value="XM_047432414.1"/>
</dbReference>
<dbReference type="RefSeq" id="XP_047288371.1">
    <molecule id="Q99767-2"/>
    <property type="nucleotide sequence ID" value="XM_047432415.1"/>
</dbReference>
<dbReference type="RefSeq" id="XP_047288372.1">
    <molecule id="Q99767-2"/>
    <property type="nucleotide sequence ID" value="XM_047432416.1"/>
</dbReference>
<dbReference type="RefSeq" id="XP_047288373.1">
    <molecule id="Q99767-2"/>
    <property type="nucleotide sequence ID" value="XM_047432417.1"/>
</dbReference>
<dbReference type="RefSeq" id="XP_047288374.1">
    <molecule id="Q99767-2"/>
    <property type="nucleotide sequence ID" value="XM_047432418.1"/>
</dbReference>
<dbReference type="RefSeq" id="XP_047288375.1">
    <molecule id="Q99767-2"/>
    <property type="nucleotide sequence ID" value="XM_047432419.1"/>
</dbReference>
<dbReference type="RefSeq" id="XP_047288376.1">
    <molecule id="Q99767-2"/>
    <property type="nucleotide sequence ID" value="XM_047432420.1"/>
</dbReference>
<dbReference type="RefSeq" id="XP_047288377.1">
    <molecule id="Q99767-2"/>
    <property type="nucleotide sequence ID" value="XM_047432421.1"/>
</dbReference>
<dbReference type="RefSeq" id="XP_047288378.1">
    <molecule id="Q99767-2"/>
    <property type="nucleotide sequence ID" value="XM_047432422.1"/>
</dbReference>
<dbReference type="RefSeq" id="XP_047288379.1">
    <molecule id="Q99767-2"/>
    <property type="nucleotide sequence ID" value="XM_047432423.1"/>
</dbReference>
<dbReference type="RefSeq" id="XP_047288380.1">
    <molecule id="Q99767-2"/>
    <property type="nucleotide sequence ID" value="XM_047432424.1"/>
</dbReference>
<dbReference type="RefSeq" id="XP_047288381.1">
    <molecule id="Q99767-2"/>
    <property type="nucleotide sequence ID" value="XM_047432425.1"/>
</dbReference>
<dbReference type="RefSeq" id="XP_054187736.1">
    <molecule id="Q99767-1"/>
    <property type="nucleotide sequence ID" value="XM_054331761.1"/>
</dbReference>
<dbReference type="RefSeq" id="XP_054187737.1">
    <molecule id="Q99767-1"/>
    <property type="nucleotide sequence ID" value="XM_054331762.1"/>
</dbReference>
<dbReference type="RefSeq" id="XP_054187738.1">
    <molecule id="Q99767-1"/>
    <property type="nucleotide sequence ID" value="XM_054331763.1"/>
</dbReference>
<dbReference type="RefSeq" id="XP_054187739.1">
    <molecule id="Q99767-1"/>
    <property type="nucleotide sequence ID" value="XM_054331764.1"/>
</dbReference>
<dbReference type="RefSeq" id="XP_054187740.1">
    <molecule id="Q99767-1"/>
    <property type="nucleotide sequence ID" value="XM_054331765.1"/>
</dbReference>
<dbReference type="RefSeq" id="XP_054187741.1">
    <molecule id="Q99767-1"/>
    <property type="nucleotide sequence ID" value="XM_054331766.1"/>
</dbReference>
<dbReference type="RefSeq" id="XP_054187742.1">
    <molecule id="Q99767-1"/>
    <property type="nucleotide sequence ID" value="XM_054331767.1"/>
</dbReference>
<dbReference type="RefSeq" id="XP_054187743.1">
    <molecule id="Q99767-1"/>
    <property type="nucleotide sequence ID" value="XM_054331768.1"/>
</dbReference>
<dbReference type="RefSeq" id="XP_054187744.1">
    <molecule id="Q99767-1"/>
    <property type="nucleotide sequence ID" value="XM_054331769.1"/>
</dbReference>
<dbReference type="RefSeq" id="XP_054187745.1">
    <molecule id="Q99767-1"/>
    <property type="nucleotide sequence ID" value="XM_054331770.1"/>
</dbReference>
<dbReference type="RefSeq" id="XP_054187746.1">
    <molecule id="Q99767-1"/>
    <property type="nucleotide sequence ID" value="XM_054331771.1"/>
</dbReference>
<dbReference type="RefSeq" id="XP_054187747.1">
    <molecule id="Q99767-1"/>
    <property type="nucleotide sequence ID" value="XM_054331772.1"/>
</dbReference>
<dbReference type="RefSeq" id="XP_054187753.1">
    <molecule id="Q99767-2"/>
    <property type="nucleotide sequence ID" value="XM_054331778.1"/>
</dbReference>
<dbReference type="RefSeq" id="XP_054187754.1">
    <molecule id="Q99767-2"/>
    <property type="nucleotide sequence ID" value="XM_054331779.1"/>
</dbReference>
<dbReference type="RefSeq" id="XP_054187755.1">
    <molecule id="Q99767-2"/>
    <property type="nucleotide sequence ID" value="XM_054331780.1"/>
</dbReference>
<dbReference type="RefSeq" id="XP_054187756.1">
    <molecule id="Q99767-2"/>
    <property type="nucleotide sequence ID" value="XM_054331781.1"/>
</dbReference>
<dbReference type="RefSeq" id="XP_054187757.1">
    <molecule id="Q99767-2"/>
    <property type="nucleotide sequence ID" value="XM_054331782.1"/>
</dbReference>
<dbReference type="RefSeq" id="XP_054187758.1">
    <molecule id="Q99767-2"/>
    <property type="nucleotide sequence ID" value="XM_054331783.1"/>
</dbReference>
<dbReference type="RefSeq" id="XP_054187759.1">
    <molecule id="Q99767-2"/>
    <property type="nucleotide sequence ID" value="XM_054331784.1"/>
</dbReference>
<dbReference type="RefSeq" id="XP_054187760.1">
    <molecule id="Q99767-2"/>
    <property type="nucleotide sequence ID" value="XM_054331785.1"/>
</dbReference>
<dbReference type="RefSeq" id="XP_054187761.1">
    <molecule id="Q99767-2"/>
    <property type="nucleotide sequence ID" value="XM_054331786.1"/>
</dbReference>
<dbReference type="RefSeq" id="XP_054187762.1">
    <molecule id="Q99767-2"/>
    <property type="nucleotide sequence ID" value="XM_054331787.1"/>
</dbReference>
<dbReference type="RefSeq" id="XP_054187763.1">
    <molecule id="Q99767-2"/>
    <property type="nucleotide sequence ID" value="XM_054331788.1"/>
</dbReference>
<dbReference type="RefSeq" id="XP_054187764.1">
    <molecule id="Q99767-2"/>
    <property type="nucleotide sequence ID" value="XM_054331789.1"/>
</dbReference>
<dbReference type="RefSeq" id="XP_054187765.1">
    <molecule id="Q99767-2"/>
    <property type="nucleotide sequence ID" value="XM_054331790.1"/>
</dbReference>
<dbReference type="RefSeq" id="XP_054187766.1">
    <molecule id="Q99767-2"/>
    <property type="nucleotide sequence ID" value="XM_054331791.1"/>
</dbReference>
<dbReference type="RefSeq" id="XP_054187767.1">
    <molecule id="Q99767-2"/>
    <property type="nucleotide sequence ID" value="XM_054331792.1"/>
</dbReference>
<dbReference type="RefSeq" id="XP_054187768.1">
    <molecule id="Q99767-2"/>
    <property type="nucleotide sequence ID" value="XM_054331793.1"/>
</dbReference>
<dbReference type="RefSeq" id="XP_054233739.1">
    <molecule id="Q99767-1"/>
    <property type="nucleotide sequence ID" value="XM_054377764.1"/>
</dbReference>
<dbReference type="RefSeq" id="XP_054233740.1">
    <molecule id="Q99767-1"/>
    <property type="nucleotide sequence ID" value="XM_054377765.1"/>
</dbReference>
<dbReference type="RefSeq" id="XP_054233741.1">
    <molecule id="Q99767-1"/>
    <property type="nucleotide sequence ID" value="XM_054377766.1"/>
</dbReference>
<dbReference type="RefSeq" id="XP_054233742.1">
    <molecule id="Q99767-1"/>
    <property type="nucleotide sequence ID" value="XM_054377767.1"/>
</dbReference>
<dbReference type="RefSeq" id="XP_054233743.1">
    <molecule id="Q99767-1"/>
    <property type="nucleotide sequence ID" value="XM_054377768.1"/>
</dbReference>
<dbReference type="RefSeq" id="XP_054233744.1">
    <molecule id="Q99767-1"/>
    <property type="nucleotide sequence ID" value="XM_054377769.1"/>
</dbReference>
<dbReference type="RefSeq" id="XP_054233745.1">
    <molecule id="Q99767-1"/>
    <property type="nucleotide sequence ID" value="XM_054377770.1"/>
</dbReference>
<dbReference type="RefSeq" id="XP_054233746.1">
    <molecule id="Q99767-1"/>
    <property type="nucleotide sequence ID" value="XM_054377771.1"/>
</dbReference>
<dbReference type="RefSeq" id="XP_054233747.1">
    <molecule id="Q99767-1"/>
    <property type="nucleotide sequence ID" value="XM_054377772.1"/>
</dbReference>
<dbReference type="RefSeq" id="XP_054233748.1">
    <molecule id="Q99767-1"/>
    <property type="nucleotide sequence ID" value="XM_054377773.1"/>
</dbReference>
<dbReference type="RefSeq" id="XP_054233749.1">
    <molecule id="Q99767-1"/>
    <property type="nucleotide sequence ID" value="XM_054377774.1"/>
</dbReference>
<dbReference type="RefSeq" id="XP_054233750.1">
    <molecule id="Q99767-1"/>
    <property type="nucleotide sequence ID" value="XM_054377775.1"/>
</dbReference>
<dbReference type="RefSeq" id="XP_054233758.1">
    <molecule id="Q99767-2"/>
    <property type="nucleotide sequence ID" value="XM_054377783.1"/>
</dbReference>
<dbReference type="RefSeq" id="XP_054233759.1">
    <molecule id="Q99767-2"/>
    <property type="nucleotide sequence ID" value="XM_054377784.1"/>
</dbReference>
<dbReference type="RefSeq" id="XP_054233760.1">
    <molecule id="Q99767-2"/>
    <property type="nucleotide sequence ID" value="XM_054377785.1"/>
</dbReference>
<dbReference type="RefSeq" id="XP_054233761.1">
    <molecule id="Q99767-2"/>
    <property type="nucleotide sequence ID" value="XM_054377786.1"/>
</dbReference>
<dbReference type="RefSeq" id="XP_054233762.1">
    <molecule id="Q99767-2"/>
    <property type="nucleotide sequence ID" value="XM_054377787.1"/>
</dbReference>
<dbReference type="RefSeq" id="XP_054233763.1">
    <molecule id="Q99767-2"/>
    <property type="nucleotide sequence ID" value="XM_054377788.1"/>
</dbReference>
<dbReference type="RefSeq" id="XP_054233764.1">
    <molecule id="Q99767-2"/>
    <property type="nucleotide sequence ID" value="XM_054377789.1"/>
</dbReference>
<dbReference type="RefSeq" id="XP_054233765.1">
    <molecule id="Q99767-2"/>
    <property type="nucleotide sequence ID" value="XM_054377790.1"/>
</dbReference>
<dbReference type="RefSeq" id="XP_054233766.1">
    <molecule id="Q99767-2"/>
    <property type="nucleotide sequence ID" value="XM_054377791.1"/>
</dbReference>
<dbReference type="RefSeq" id="XP_054233767.1">
    <molecule id="Q99767-2"/>
    <property type="nucleotide sequence ID" value="XM_054377792.1"/>
</dbReference>
<dbReference type="RefSeq" id="XP_054233768.1">
    <molecule id="Q99767-2"/>
    <property type="nucleotide sequence ID" value="XM_054377793.1"/>
</dbReference>
<dbReference type="RefSeq" id="XP_054233769.1">
    <molecule id="Q99767-2"/>
    <property type="nucleotide sequence ID" value="XM_054377794.1"/>
</dbReference>
<dbReference type="RefSeq" id="XP_054233770.1">
    <molecule id="Q99767-2"/>
    <property type="nucleotide sequence ID" value="XM_054377795.1"/>
</dbReference>
<dbReference type="RefSeq" id="XP_054233771.1">
    <molecule id="Q99767-2"/>
    <property type="nucleotide sequence ID" value="XM_054377796.1"/>
</dbReference>
<dbReference type="RefSeq" id="XP_054233772.1">
    <molecule id="Q99767-2"/>
    <property type="nucleotide sequence ID" value="XM_054377797.1"/>
</dbReference>
<dbReference type="RefSeq" id="XP_054233773.1">
    <molecule id="Q99767-2"/>
    <property type="nucleotide sequence ID" value="XM_054377798.1"/>
</dbReference>
<dbReference type="RefSeq" id="XP_054233774.1">
    <molecule id="Q99767-2"/>
    <property type="nucleotide sequence ID" value="XM_054377799.1"/>
</dbReference>
<dbReference type="SMR" id="Q99767"/>
<dbReference type="BioGRID" id="106818">
    <property type="interactions" value="44"/>
</dbReference>
<dbReference type="ELM" id="Q99767"/>
<dbReference type="FunCoup" id="Q99767">
    <property type="interactions" value="671"/>
</dbReference>
<dbReference type="IntAct" id="Q99767">
    <property type="interactions" value="37"/>
</dbReference>
<dbReference type="MINT" id="Q99767"/>
<dbReference type="STRING" id="9606.ENSP00000453293"/>
<dbReference type="TCDB" id="8.A.24.2.3">
    <property type="family name" value="the ezrin/radixin/moesin-binding phosphoprotein 50 (ebp50) family"/>
</dbReference>
<dbReference type="iPTMnet" id="Q99767"/>
<dbReference type="PhosphoSitePlus" id="Q99767"/>
<dbReference type="BioMuta" id="APBA2"/>
<dbReference type="DMDM" id="6226950"/>
<dbReference type="jPOST" id="Q99767"/>
<dbReference type="MassIVE" id="Q99767"/>
<dbReference type="PaxDb" id="9606-ENSP00000453293"/>
<dbReference type="PeptideAtlas" id="Q99767"/>
<dbReference type="ProteomicsDB" id="20327"/>
<dbReference type="ProteomicsDB" id="78469">
    <molecule id="Q99767-1"/>
</dbReference>
<dbReference type="Pumba" id="Q99767"/>
<dbReference type="Antibodypedia" id="22443">
    <property type="antibodies" value="208 antibodies from 35 providers"/>
</dbReference>
<dbReference type="DNASU" id="321"/>
<dbReference type="Ensembl" id="ENST00000411764.5">
    <molecule id="Q99767-2"/>
    <property type="protein sequence ID" value="ENSP00000409312.1"/>
    <property type="gene ID" value="ENSG00000034053.15"/>
</dbReference>
<dbReference type="Ensembl" id="ENST00000558259.5">
    <molecule id="Q99767-1"/>
    <property type="protein sequence ID" value="ENSP00000454171.1"/>
    <property type="gene ID" value="ENSG00000034053.15"/>
</dbReference>
<dbReference type="Ensembl" id="ENST00000558330.5">
    <molecule id="Q99767-2"/>
    <property type="protein sequence ID" value="ENSP00000452722.1"/>
    <property type="gene ID" value="ENSG00000034053.15"/>
</dbReference>
<dbReference type="Ensembl" id="ENST00000558402.5">
    <molecule id="Q99767-1"/>
    <property type="protein sequence ID" value="ENSP00000453293.1"/>
    <property type="gene ID" value="ENSG00000034053.15"/>
</dbReference>
<dbReference type="Ensembl" id="ENST00000561069.5">
    <molecule id="Q99767-1"/>
    <property type="protein sequence ID" value="ENSP00000453144.1"/>
    <property type="gene ID" value="ENSG00000034053.15"/>
</dbReference>
<dbReference type="Ensembl" id="ENST00000612449.2">
    <molecule id="Q99767-2"/>
    <property type="protein sequence ID" value="ENSP00000483174.1"/>
    <property type="gene ID" value="ENSG00000276495.4"/>
</dbReference>
<dbReference type="Ensembl" id="ENST00000620457.4">
    <molecule id="Q99767-1"/>
    <property type="protein sequence ID" value="ENSP00000480384.1"/>
    <property type="gene ID" value="ENSG00000276495.4"/>
</dbReference>
<dbReference type="Ensembl" id="ENST00000631894.1">
    <molecule id="Q99767-1"/>
    <property type="protein sequence ID" value="ENSP00000488107.1"/>
    <property type="gene ID" value="ENSG00000276495.4"/>
</dbReference>
<dbReference type="Ensembl" id="ENST00000683413.1">
    <molecule id="Q99767-1"/>
    <property type="protein sequence ID" value="ENSP00000507394.1"/>
    <property type="gene ID" value="ENSG00000034053.15"/>
</dbReference>
<dbReference type="GeneID" id="321"/>
<dbReference type="KEGG" id="hsa:321"/>
<dbReference type="MANE-Select" id="ENST00000683413.1">
    <property type="protein sequence ID" value="ENSP00000507394.1"/>
    <property type="RefSeq nucleotide sequence ID" value="NM_001353788.2"/>
    <property type="RefSeq protein sequence ID" value="NP_001340717.1"/>
</dbReference>
<dbReference type="UCSC" id="uc001zck.4">
    <molecule id="Q99767-1"/>
    <property type="organism name" value="human"/>
</dbReference>
<dbReference type="AGR" id="HGNC:579"/>
<dbReference type="CTD" id="321"/>
<dbReference type="DisGeNET" id="321"/>
<dbReference type="GeneCards" id="APBA2"/>
<dbReference type="HGNC" id="HGNC:579">
    <property type="gene designation" value="APBA2"/>
</dbReference>
<dbReference type="HPA" id="ENSG00000034053">
    <property type="expression patterns" value="Tissue enriched (brain)"/>
</dbReference>
<dbReference type="MalaCards" id="APBA2"/>
<dbReference type="MIM" id="602712">
    <property type="type" value="gene"/>
</dbReference>
<dbReference type="neXtProt" id="NX_Q99767"/>
<dbReference type="OpenTargets" id="ENSG00000034053"/>
<dbReference type="PharmGKB" id="PA24870"/>
<dbReference type="VEuPathDB" id="HostDB:ENSG00000034053"/>
<dbReference type="eggNOG" id="KOG3605">
    <property type="taxonomic scope" value="Eukaryota"/>
</dbReference>
<dbReference type="GeneTree" id="ENSGT00940000158943"/>
<dbReference type="HOGENOM" id="CLU_013563_3_0_1"/>
<dbReference type="InParanoid" id="Q99767"/>
<dbReference type="OMA" id="ECADHSP"/>
<dbReference type="OrthoDB" id="5987010at2759"/>
<dbReference type="PAN-GO" id="Q99767">
    <property type="GO annotations" value="5 GO annotations based on evolutionary models"/>
</dbReference>
<dbReference type="PhylomeDB" id="Q99767"/>
<dbReference type="TreeFam" id="TF315245"/>
<dbReference type="PathwayCommons" id="Q99767"/>
<dbReference type="Reactome" id="R-HSA-6794361">
    <property type="pathway name" value="Neurexins and neuroligins"/>
</dbReference>
<dbReference type="SignaLink" id="Q99767"/>
<dbReference type="SIGNOR" id="Q99767"/>
<dbReference type="BioGRID-ORCS" id="321">
    <property type="hits" value="12 hits in 1152 CRISPR screens"/>
</dbReference>
<dbReference type="ChiTaRS" id="APBA2">
    <property type="organism name" value="human"/>
</dbReference>
<dbReference type="GeneWiki" id="APBA2"/>
<dbReference type="GenomeRNAi" id="321"/>
<dbReference type="Pharos" id="Q99767">
    <property type="development level" value="Tbio"/>
</dbReference>
<dbReference type="PRO" id="PR:Q99767"/>
<dbReference type="Proteomes" id="UP000005640">
    <property type="component" value="Chromosome 15"/>
</dbReference>
<dbReference type="RNAct" id="Q99767">
    <property type="molecule type" value="protein"/>
</dbReference>
<dbReference type="Bgee" id="ENSG00000034053">
    <property type="expression patterns" value="Expressed in superior frontal gyrus and 98 other cell types or tissues"/>
</dbReference>
<dbReference type="ExpressionAtlas" id="Q99767">
    <property type="expression patterns" value="baseline and differential"/>
</dbReference>
<dbReference type="GO" id="GO:0005737">
    <property type="term" value="C:cytoplasm"/>
    <property type="evidence" value="ECO:0000318"/>
    <property type="project" value="GO_Central"/>
</dbReference>
<dbReference type="GO" id="GO:0043197">
    <property type="term" value="C:dendritic spine"/>
    <property type="evidence" value="ECO:0000318"/>
    <property type="project" value="GO_Central"/>
</dbReference>
<dbReference type="GO" id="GO:0005886">
    <property type="term" value="C:plasma membrane"/>
    <property type="evidence" value="ECO:0000318"/>
    <property type="project" value="GO_Central"/>
</dbReference>
<dbReference type="GO" id="GO:0098793">
    <property type="term" value="C:presynapse"/>
    <property type="evidence" value="ECO:0007669"/>
    <property type="project" value="GOC"/>
</dbReference>
<dbReference type="GO" id="GO:0098685">
    <property type="term" value="C:Schaffer collateral - CA1 synapse"/>
    <property type="evidence" value="ECO:0007669"/>
    <property type="project" value="Ensembl"/>
</dbReference>
<dbReference type="GO" id="GO:0001540">
    <property type="term" value="F:amyloid-beta binding"/>
    <property type="evidence" value="ECO:0000318"/>
    <property type="project" value="GO_Central"/>
</dbReference>
<dbReference type="GO" id="GO:0042802">
    <property type="term" value="F:identical protein binding"/>
    <property type="evidence" value="ECO:0000353"/>
    <property type="project" value="IntAct"/>
</dbReference>
<dbReference type="GO" id="GO:0007268">
    <property type="term" value="P:chemical synaptic transmission"/>
    <property type="evidence" value="ECO:0000318"/>
    <property type="project" value="GO_Central"/>
</dbReference>
<dbReference type="GO" id="GO:0001701">
    <property type="term" value="P:in utero embryonic development"/>
    <property type="evidence" value="ECO:0007669"/>
    <property type="project" value="Ensembl"/>
</dbReference>
<dbReference type="GO" id="GO:0007626">
    <property type="term" value="P:locomotory behavior"/>
    <property type="evidence" value="ECO:0007669"/>
    <property type="project" value="Ensembl"/>
</dbReference>
<dbReference type="GO" id="GO:0035264">
    <property type="term" value="P:multicellular organism growth"/>
    <property type="evidence" value="ECO:0007669"/>
    <property type="project" value="Ensembl"/>
</dbReference>
<dbReference type="GO" id="GO:0007399">
    <property type="term" value="P:nervous system development"/>
    <property type="evidence" value="ECO:0000304"/>
    <property type="project" value="ProtInc"/>
</dbReference>
<dbReference type="GO" id="GO:0099171">
    <property type="term" value="P:presynaptic modulation of chemical synaptic transmission"/>
    <property type="evidence" value="ECO:0007669"/>
    <property type="project" value="Ensembl"/>
</dbReference>
<dbReference type="GO" id="GO:0015031">
    <property type="term" value="P:protein transport"/>
    <property type="evidence" value="ECO:0007669"/>
    <property type="project" value="UniProtKB-KW"/>
</dbReference>
<dbReference type="GO" id="GO:0010468">
    <property type="term" value="P:regulation of gene expression"/>
    <property type="evidence" value="ECO:0007669"/>
    <property type="project" value="Ensembl"/>
</dbReference>
<dbReference type="CDD" id="cd06720">
    <property type="entry name" value="PDZ1_APBA1_3-like"/>
    <property type="match status" value="1"/>
</dbReference>
<dbReference type="CDD" id="cd06793">
    <property type="entry name" value="PDZ2_APBA1_3-like"/>
    <property type="match status" value="1"/>
</dbReference>
<dbReference type="CDD" id="cd01208">
    <property type="entry name" value="PTB_X11"/>
    <property type="match status" value="1"/>
</dbReference>
<dbReference type="FunFam" id="2.30.29.30:FF:000044">
    <property type="entry name" value="amyloid beta A4 precursor protein-binding family A member 1"/>
    <property type="match status" value="1"/>
</dbReference>
<dbReference type="FunFam" id="2.30.42.10:FF:000007">
    <property type="entry name" value="Amyloid beta A4 protein-binding family A member"/>
    <property type="match status" value="1"/>
</dbReference>
<dbReference type="FunFam" id="2.30.42.10:FF:000017">
    <property type="entry name" value="Amyloid beta A4 protein-binding family A member 1"/>
    <property type="match status" value="1"/>
</dbReference>
<dbReference type="Gene3D" id="2.30.42.10">
    <property type="match status" value="2"/>
</dbReference>
<dbReference type="Gene3D" id="2.30.29.30">
    <property type="entry name" value="Pleckstrin-homology domain (PH domain)/Phosphotyrosine-binding domain (PTB)"/>
    <property type="match status" value="1"/>
</dbReference>
<dbReference type="InterPro" id="IPR051230">
    <property type="entry name" value="APP-Binding"/>
</dbReference>
<dbReference type="InterPro" id="IPR001478">
    <property type="entry name" value="PDZ"/>
</dbReference>
<dbReference type="InterPro" id="IPR036034">
    <property type="entry name" value="PDZ_sf"/>
</dbReference>
<dbReference type="InterPro" id="IPR011993">
    <property type="entry name" value="PH-like_dom_sf"/>
</dbReference>
<dbReference type="InterPro" id="IPR006020">
    <property type="entry name" value="PTB/PI_dom"/>
</dbReference>
<dbReference type="PANTHER" id="PTHR12345:SF12">
    <property type="entry name" value="AMYLOID-BETA A4 PRECURSOR PROTEIN-BINDING FAMILY A MEMBER 2"/>
    <property type="match status" value="1"/>
</dbReference>
<dbReference type="PANTHER" id="PTHR12345">
    <property type="entry name" value="SYNTENIN RELATED"/>
    <property type="match status" value="1"/>
</dbReference>
<dbReference type="Pfam" id="PF00595">
    <property type="entry name" value="PDZ"/>
    <property type="match status" value="2"/>
</dbReference>
<dbReference type="Pfam" id="PF00640">
    <property type="entry name" value="PID"/>
    <property type="match status" value="1"/>
</dbReference>
<dbReference type="SMART" id="SM00228">
    <property type="entry name" value="PDZ"/>
    <property type="match status" value="2"/>
</dbReference>
<dbReference type="SMART" id="SM00462">
    <property type="entry name" value="PTB"/>
    <property type="match status" value="1"/>
</dbReference>
<dbReference type="SUPFAM" id="SSF50156">
    <property type="entry name" value="PDZ domain-like"/>
    <property type="match status" value="2"/>
</dbReference>
<dbReference type="SUPFAM" id="SSF50729">
    <property type="entry name" value="PH domain-like"/>
    <property type="match status" value="1"/>
</dbReference>
<dbReference type="PROSITE" id="PS50106">
    <property type="entry name" value="PDZ"/>
    <property type="match status" value="2"/>
</dbReference>
<dbReference type="PROSITE" id="PS01179">
    <property type="entry name" value="PID"/>
    <property type="match status" value="1"/>
</dbReference>
<comment type="function">
    <text>Putative function in synaptic vesicle exocytosis by binding to STXBP1, an essential component of the synaptic vesicle exocytotic machinery. May modulate processing of the amyloid-beta precursor protein (APP) and hence formation of APP-beta.</text>
</comment>
<comment type="subunit">
    <text evidence="4">Part of a multimeric complex containing STXBP1 and syntaxin-1. Binds to the cytoplasmic domain of amyloid-beta protein, and to the nuclear factor NF-kappa-B/p65 via its PDZ domain. Interacts with the N-terminal domain of NECAB3.</text>
</comment>
<comment type="interaction">
    <interactant intactId="EBI-81711">
        <id>Q99767</id>
    </interactant>
    <interactant intactId="EBI-81711">
        <id>Q99767</id>
        <label>APBA2</label>
    </interactant>
    <organismsDiffer>false</organismsDiffer>
    <experiments>2</experiments>
</comment>
<comment type="interaction">
    <interactant intactId="EBI-81711">
        <id>Q99767</id>
    </interactant>
    <interactant intactId="EBI-742588">
        <id>Q9UBZ4</id>
        <label>APEX2</label>
    </interactant>
    <organismsDiffer>false</organismsDiffer>
    <experiments>3</experiments>
</comment>
<comment type="interaction">
    <interactant intactId="EBI-81711">
        <id>Q99767</id>
    </interactant>
    <interactant intactId="EBI-77613">
        <id>P05067</id>
        <label>APP</label>
    </interactant>
    <organismsDiffer>false</organismsDiffer>
    <experiments>2</experiments>
</comment>
<comment type="interaction">
    <interactant intactId="EBI-81711">
        <id>Q99767</id>
    </interactant>
    <interactant intactId="EBI-522075">
        <id>O94985</id>
        <label>CLSTN1</label>
    </interactant>
    <organismsDiffer>false</organismsDiffer>
    <experiments>2</experiments>
</comment>
<comment type="interaction">
    <interactant intactId="EBI-12218351">
        <id>Q99767-2</id>
    </interactant>
    <interactant intactId="EBI-6447163">
        <id>Q8N7X4</id>
        <label>MAGEB6</label>
    </interactant>
    <organismsDiffer>false</organismsDiffer>
    <experiments>3</experiments>
</comment>
<comment type="interaction">
    <interactant intactId="EBI-12218351">
        <id>Q99767-2</id>
    </interactant>
    <interactant intactId="EBI-2511991">
        <id>Q9Y2K6</id>
        <label>USP20</label>
    </interactant>
    <organismsDiffer>false</organismsDiffer>
    <experiments>3</experiments>
</comment>
<comment type="alternative products">
    <event type="alternative splicing"/>
    <isoform>
        <id>Q99767-1</id>
        <name>1</name>
        <sequence type="displayed"/>
    </isoform>
    <isoform>
        <id>Q99767-2</id>
        <name>2</name>
        <sequence type="described" ref="VSP_045692"/>
    </isoform>
</comment>
<comment type="tissue specificity">
    <text>Brain.</text>
</comment>
<comment type="domain">
    <text>Composed of an N-terminal domain that binds STXBP1, a middle phosphotyrosine-binding domain (PID/PTB) that mediates binding with the cytoplasmic domain of the amyloid-beta precursor protein, and two C-terminal PDZ domains thought to attach proteins to the plasma membrane.</text>
</comment>
<sequence>MAHRKLESVGSGMLDHRVRPGPVPHSQEPESEDMELPLEGYVPEGLELAALRPESPAPEEQECHNHSPDGDSSSDYVNNTSEEEDYDEGLPEEEEGITYYIRYCPEDDSYLEGMDCNGEEYLAHSAHPVDTDECQEAVEEWTDSAGPHPHGHEAEGSQDYPDGQLPIPEDEPSVLEAHDQEEDGHYCASKEGYQDYYPEEANGNTGASPYRLRRGDGDLEDQEEDIDQIVAEIKMSLSMTSITSASEASPEHGPEPGPEDSVEACPPIKASCSPSRHEARPKSLNLLPEAKHPGDPQRGFKPKTRTPEERLKWPHEQVCNGLEQPRKQQRSDLNGPVDNNNIPETKKVASFPSFVAVPGPCEPEDLIDGIIFAANYLGSTQLLSERNPSKNIRMMQAQEAVSRVKRMQKAAKIKKKANSEGDAQTLTEVDLFISTQRIKVLNADTQETMMDHALRTISYIADIGNIVVLMARRRMPRSASQDCIETTPGAQEGKKQYKMICHVFESEDAQLIAQSIGQAFSVAYQEFLRANGINPEDLSQKEYSDIINTQEMYNDDLIHFSNSENCKELQLEKHKGEILGVVVVESGWGSILPTVILANMMNGGPAARSGKLSIGDQIMSINGTSLVGLPLATCQGIIKGLKNQTQVKLNIVSCPPVTTVLIKRPDLKYQLGFSVQNGIICSLMRGGIAERGGVRVGHRIIEINGQSVVATAHEKIVQALSNSVGEIHMKTMPAAMFRLLTGQETPLYI</sequence>
<name>APBA2_HUMAN</name>
<protein>
    <recommendedName>
        <fullName>Amyloid-beta A4 precursor protein-binding family A member 2</fullName>
    </recommendedName>
    <alternativeName>
        <fullName>Adapter protein X11beta</fullName>
    </alternativeName>
    <alternativeName>
        <fullName>Neuron-specific X11L protein</fullName>
    </alternativeName>
    <alternativeName>
        <fullName>Neuronal Munc18-1-interacting protein 2</fullName>
        <shortName>Mint-2</shortName>
    </alternativeName>
</protein>
<accession>Q99767</accession>
<accession>E9PGI4</accession>
<accession>O60571</accession>
<accession>Q5XKC0</accession>
<keyword id="KW-0025">Alternative splicing</keyword>
<keyword id="KW-0597">Phosphoprotein</keyword>
<keyword id="KW-0653">Protein transport</keyword>
<keyword id="KW-1267">Proteomics identification</keyword>
<keyword id="KW-1185">Reference proteome</keyword>
<keyword id="KW-0677">Repeat</keyword>
<keyword id="KW-0813">Transport</keyword>